<name>CA1A_CONLI</name>
<keyword id="KW-0002">3D-structure</keyword>
<keyword id="KW-0008">Acetylcholine receptor inhibiting toxin</keyword>
<keyword id="KW-0027">Amidation</keyword>
<keyword id="KW-0165">Cleavage on pair of basic residues</keyword>
<keyword id="KW-1015">Disulfide bond</keyword>
<keyword id="KW-0872">Ion channel impairing toxin</keyword>
<keyword id="KW-0528">Neurotoxin</keyword>
<keyword id="KW-0629">Postsynaptic neurotoxin</keyword>
<keyword id="KW-0964">Secreted</keyword>
<keyword id="KW-0800">Toxin</keyword>
<comment type="function">
    <text evidence="4 6">Alpha-conotoxins act on postsynaptic membranes, they bind to the nicotinic acetylcholine receptors (nAChR) and thus inhibit them. This toxin blocks alpha-3-beta-2/CHRNA3-CHRNB2 nAChR with high selectivity (IC(50)=8.67 nM (on rat) and 17.5 (on human)) (PubMed:24398291). Also has weaker activity on alpha-6/alpha-3-beta-2-beta-3 (CHRNA6/CHRNA3-CHRNB2-CHRNB3) (IC(50)=108 nM (on rat)), alpha-6/alpha-3-beta-4 (CHRNA6/CHRNA3-CHRNB4) (IC(50)=121 nM (on rat)), alpha-3-beta-4 (CHRNA3-CHRNB4) (IC(50)=148 nM (on rat)), and alpha-7/CHRNA7 nAChRs (IC(50)=3000 nM (on rat)) (PubMed:24398291). When tested on mouse with hot-plate tests, this toxin significantly increases the base pain threshold and shows analgesic effects (PubMed:26742048).</text>
</comment>
<comment type="subcellular location">
    <subcellularLocation>
        <location evidence="3">Secreted</location>
    </subcellularLocation>
</comment>
<comment type="tissue specificity">
    <text evidence="9">Expressed by the venom duct.</text>
</comment>
<comment type="domain">
    <text evidence="9">The cysteine framework is I (CC-C-C). Alpha4/7 pattern.</text>
</comment>
<comment type="miscellaneous">
    <text evidence="4 6">Negative results: does not block alpha-9-alpha-10/CHRNA9-CHRNA10, alpha-2-beta-2/CHRNA2-CHRNB2, alpha-2-beta-4/CHRNA2-CHRNB4, alpha-3-beta-4/CHRNA3-CHRNB4, alpha-4-beta-2/CHRNA4-CHRNB2, alpha-4-beta-4/CHRNA4-CHRNB4, alpha-6/alpha-3-beta-2-beta-3 (CHRNA6/CHRNA3-CHRNB2-CHRNB3), alpha-6-beta-4/CHRNA6-CHRNB4, and alpha-1-beta-1-epsilon-delta/CHRNA1-CHRNB1-CHRNE-CHRND.</text>
</comment>
<comment type="similarity">
    <text evidence="9">Belongs to the conotoxin A superfamily.</text>
</comment>
<protein>
    <recommendedName>
        <fullName evidence="7 8">Alpha-conotoxin LvIA</fullName>
        <shortName evidence="7 8">Alpha-CTx LvIA</shortName>
    </recommendedName>
</protein>
<evidence type="ECO:0000250" key="1"/>
<evidence type="ECO:0000250" key="2">
    <source>
        <dbReference type="UniProtKB" id="P56636"/>
    </source>
</evidence>
<evidence type="ECO:0000250" key="3">
    <source>
        <dbReference type="UniProtKB" id="P85013"/>
    </source>
</evidence>
<evidence type="ECO:0000269" key="4">
    <source>
    </source>
</evidence>
<evidence type="ECO:0000269" key="5">
    <source>
    </source>
</evidence>
<evidence type="ECO:0000269" key="6">
    <source>
    </source>
</evidence>
<evidence type="ECO:0000303" key="7">
    <source>
    </source>
</evidence>
<evidence type="ECO:0000303" key="8">
    <source>
    </source>
</evidence>
<evidence type="ECO:0000305" key="9"/>
<evidence type="ECO:0000305" key="10">
    <source>
    </source>
</evidence>
<evidence type="ECO:0007744" key="11">
    <source>
        <dbReference type="PDB" id="2MDQ"/>
    </source>
</evidence>
<evidence type="ECO:0007829" key="12">
    <source>
        <dbReference type="PDB" id="6M4X"/>
    </source>
</evidence>
<evidence type="ECO:0007829" key="13">
    <source>
        <dbReference type="PDB" id="6M4Z"/>
    </source>
</evidence>
<dbReference type="EMBL" id="HF566436">
    <property type="protein sequence ID" value="CCP46959.1"/>
    <property type="molecule type" value="Genomic_DNA"/>
</dbReference>
<dbReference type="PDB" id="2MDQ">
    <property type="method" value="NMR"/>
    <property type="chains" value="A=21-36"/>
</dbReference>
<dbReference type="PDB" id="5XGL">
    <property type="method" value="X-ray"/>
    <property type="resolution" value="3.44 A"/>
    <property type="chains" value="C/E/F/H/J=21-36"/>
</dbReference>
<dbReference type="PDB" id="6M4X">
    <property type="method" value="X-ray"/>
    <property type="resolution" value="3.00 A"/>
    <property type="chains" value="C/E/F/H/J=21-36"/>
</dbReference>
<dbReference type="PDB" id="6M4Z">
    <property type="method" value="X-ray"/>
    <property type="resolution" value="2.80 A"/>
    <property type="chains" value="C/E/F/H/J=21-36"/>
</dbReference>
<dbReference type="PDB" id="9BAF">
    <property type="method" value="NMR"/>
    <property type="chains" value="A=21-36"/>
</dbReference>
<dbReference type="PDBsum" id="2MDQ"/>
<dbReference type="PDBsum" id="5XGL"/>
<dbReference type="PDBsum" id="6M4X"/>
<dbReference type="PDBsum" id="6M4Z"/>
<dbReference type="PDBsum" id="9BAF"/>
<dbReference type="BMRB" id="L8BU87"/>
<dbReference type="SMR" id="L8BU87"/>
<dbReference type="TCDB" id="8.B.32.1.4">
    <property type="family name" value="the nicotinic acetylcholine receptor-targeting alpha-conotoxin (a-conotoxin) family"/>
</dbReference>
<dbReference type="GO" id="GO:0005576">
    <property type="term" value="C:extracellular region"/>
    <property type="evidence" value="ECO:0007669"/>
    <property type="project" value="UniProtKB-SubCell"/>
</dbReference>
<dbReference type="GO" id="GO:0035792">
    <property type="term" value="C:host cell postsynaptic membrane"/>
    <property type="evidence" value="ECO:0007669"/>
    <property type="project" value="UniProtKB-KW"/>
</dbReference>
<dbReference type="GO" id="GO:0030550">
    <property type="term" value="F:acetylcholine receptor inhibitor activity"/>
    <property type="evidence" value="ECO:0007669"/>
    <property type="project" value="UniProtKB-KW"/>
</dbReference>
<dbReference type="GO" id="GO:0099106">
    <property type="term" value="F:ion channel regulator activity"/>
    <property type="evidence" value="ECO:0007669"/>
    <property type="project" value="UniProtKB-KW"/>
</dbReference>
<dbReference type="GO" id="GO:0090729">
    <property type="term" value="F:toxin activity"/>
    <property type="evidence" value="ECO:0007669"/>
    <property type="project" value="UniProtKB-KW"/>
</dbReference>
<dbReference type="InterPro" id="IPR009958">
    <property type="entry name" value="Conotoxin_a-typ"/>
</dbReference>
<dbReference type="InterPro" id="IPR018072">
    <property type="entry name" value="Conotoxin_a-typ_CS"/>
</dbReference>
<dbReference type="Pfam" id="PF07365">
    <property type="entry name" value="Toxin_8"/>
    <property type="match status" value="1"/>
</dbReference>
<dbReference type="PROSITE" id="PS60014">
    <property type="entry name" value="ALPHA_CONOTOXIN"/>
    <property type="match status" value="1"/>
</dbReference>
<organism>
    <name type="scientific">Conus lividus</name>
    <name type="common">Livid cone</name>
    <dbReference type="NCBI Taxonomy" id="89426"/>
    <lineage>
        <taxon>Eukaryota</taxon>
        <taxon>Metazoa</taxon>
        <taxon>Spiralia</taxon>
        <taxon>Lophotrochozoa</taxon>
        <taxon>Mollusca</taxon>
        <taxon>Gastropoda</taxon>
        <taxon>Caenogastropoda</taxon>
        <taxon>Neogastropoda</taxon>
        <taxon>Conoidea</taxon>
        <taxon>Conidae</taxon>
        <taxon>Conus</taxon>
        <taxon>Lividoconus</taxon>
    </lineage>
</organism>
<accession>L8BU87</accession>
<reference key="1">
    <citation type="journal article" date="2014" name="FASEB J.">
        <title>A novel alpha4/7-conotoxin LvIA from Conus lividus that selectively blocks alpha3beta2 vs. alpha6/alpha3beta2beta3 nicotinic acetylcholine receptors.</title>
        <authorList>
            <person name="Luo S."/>
            <person name="Zhangsun D."/>
            <person name="Schroeder C.I."/>
            <person name="Zhu X."/>
            <person name="Hu Y."/>
            <person name="Wu Y."/>
            <person name="Weltzin M.M."/>
            <person name="Eberhard S."/>
            <person name="Kaas Q."/>
            <person name="Craik D.J."/>
            <person name="McIntosh J.M."/>
            <person name="Whiteaker P."/>
        </authorList>
    </citation>
    <scope>NUCLEOTIDE SEQUENCE [GENOMIC DNA]</scope>
    <scope>SYNTHESIS OF 21-36</scope>
    <scope>AMIDATION AT CYS-36</scope>
    <scope>FUNCTION</scope>
    <scope>STRUCTURE BY NMR OF 21-36</scope>
    <scope>SITE ASP-31</scope>
    <source>
        <tissue>Venom duct</tissue>
    </source>
</reference>
<reference key="2">
    <citation type="journal article" date="2016" name="Mar. Drugs">
        <title>Recombinant expression and characterization of alpha-Conotoxin LvIA in Escherichia coli.</title>
        <authorList>
            <person name="Zhu X."/>
            <person name="Bi J."/>
            <person name="Yu J."/>
            <person name="Li X."/>
            <person name="Zhang Y."/>
            <person name="Zhangsun D."/>
            <person name="Luo S."/>
        </authorList>
    </citation>
    <scope>FUNCTION</scope>
    <scope>BIOASSAY</scope>
</reference>
<reference key="3">
    <citation type="journal article" date="2015" name="Mol. Pharmacol.">
        <title>Alpha-conotoxins identify the alpha3beta4* subtype as the predominant nicotinic acetylcholine receptor expressed in human adrenal chromaffin cells.</title>
        <authorList>
            <person name="Hone A.J."/>
            <person name="McIntosh J.M."/>
            <person name="Azam L."/>
            <person name="Lindstrom J."/>
            <person name="Lucero L."/>
            <person name="Whiteaker P."/>
            <person name="Passas J."/>
            <person name="Blazquez J."/>
            <person name="Albillos A."/>
        </authorList>
    </citation>
    <scope>MUTAGENESIS OF 29-ASN-VAL-30</scope>
    <scope>SYNTHESIS OF 21-36</scope>
</reference>
<reference key="4">
    <citation type="journal article" date="2016" name="Mol. Pharmacol.">
        <title>Correction to 'alpha-conotoxins identify the alpha3beta4* subtype as the predominant nicotinic acetylcholine receptor expressed in human adrenal chromaffin cells'.</title>
        <authorList>
            <person name="Hone A.J."/>
            <person name="McIntosh J.M."/>
            <person name="Azam L."/>
            <person name="Lindstrom J."/>
            <person name="Lucero L."/>
            <person name="Whiteaker P."/>
            <person name="Passas J."/>
            <person name="Blazquez J."/>
            <person name="Albillos A."/>
        </authorList>
    </citation>
    <scope>ERRATUM OF PUBMED:26330550</scope>
</reference>
<sequence>FRGRDAAAKASGLVGLTDRRGCCSHPACNVDHPEICG</sequence>
<feature type="propeptide" id="PRO_0000430172" evidence="1">
    <location>
        <begin position="1" status="less than"/>
        <end position="20"/>
    </location>
</feature>
<feature type="peptide" id="PRO_0000430173" description="Alpha-conotoxin LvIA" evidence="10">
    <location>
        <begin position="21"/>
        <end position="36"/>
    </location>
</feature>
<feature type="region of interest" description="Ser-Xaa-Pro motif, crucial for potent interaction with nAChR" evidence="2">
    <location>
        <begin position="24"/>
        <end position="26"/>
    </location>
</feature>
<feature type="site" description="May play a crucial role for the selectivity for alpha-3-beta-2 nAChR" evidence="10">
    <location>
        <position position="31"/>
    </location>
</feature>
<feature type="modified residue" description="Cysteine amide" evidence="10">
    <location>
        <position position="36"/>
    </location>
</feature>
<feature type="disulfide bond" evidence="10 11">
    <location>
        <begin position="22"/>
        <end position="28"/>
    </location>
</feature>
<feature type="disulfide bond" evidence="10 11">
    <location>
        <begin position="23"/>
        <end position="36"/>
    </location>
</feature>
<feature type="mutagenesis site" description="Shows inhibition on alpha-3-beta-2 (IC(50)=3.3 nM), beta-3-alpha-6-beta-2-alpha-4-beta-2 (IC(50)=11.4 nM), alpha-6/alpha-3-beta-2-beta-3 (IC(50)=13.5 nM), alpha-4-beta-2 (IC(50)=195 nM), alpha-6/alpha-3-beta-4 (IC(50)=1000 nM) nAChRs. Does not inhibit alpha-3-beta-4, beta-4-alpha-3-beta-4-alpha-3-alpha-5, and alpha-4-beta-4 nAChRs." evidence="5">
    <original>NV</original>
    <variation>RA</variation>
    <location>
        <begin position="29"/>
        <end position="30"/>
    </location>
</feature>
<feature type="non-terminal residue">
    <location>
        <position position="1"/>
    </location>
</feature>
<feature type="helix" evidence="12">
    <location>
        <begin position="22"/>
        <end position="24"/>
    </location>
</feature>
<feature type="helix" evidence="13">
    <location>
        <begin position="26"/>
        <end position="31"/>
    </location>
</feature>
<feature type="turn" evidence="13">
    <location>
        <begin position="33"/>
        <end position="35"/>
    </location>
</feature>
<proteinExistence type="inferred from homology"/>